<reference key="1">
    <citation type="journal article" date="2009" name="Appl. Environ. Microbiol.">
        <title>Genome analysis of the meat starter culture bacterium Staphylococcus carnosus TM300.</title>
        <authorList>
            <person name="Rosenstein R."/>
            <person name="Nerz C."/>
            <person name="Biswas L."/>
            <person name="Resch A."/>
            <person name="Raddatz G."/>
            <person name="Schuster S.C."/>
            <person name="Goetz F."/>
        </authorList>
    </citation>
    <scope>NUCLEOTIDE SEQUENCE [LARGE SCALE GENOMIC DNA]</scope>
    <source>
        <strain>TM300</strain>
    </source>
</reference>
<proteinExistence type="inferred from homology"/>
<comment type="function">
    <text evidence="1">Has nucleoside phosphatase activity towards nucleoside triphosphates and nucleoside diphosphates.</text>
</comment>
<comment type="catalytic activity">
    <reaction evidence="1">
        <text>a ribonucleoside 5'-triphosphate + H2O = a ribonucleoside 5'-diphosphate + phosphate + H(+)</text>
        <dbReference type="Rhea" id="RHEA:23680"/>
        <dbReference type="ChEBI" id="CHEBI:15377"/>
        <dbReference type="ChEBI" id="CHEBI:15378"/>
        <dbReference type="ChEBI" id="CHEBI:43474"/>
        <dbReference type="ChEBI" id="CHEBI:57930"/>
        <dbReference type="ChEBI" id="CHEBI:61557"/>
        <dbReference type="EC" id="3.6.1.15"/>
    </reaction>
</comment>
<comment type="catalytic activity">
    <reaction evidence="1">
        <text>a ribonucleoside 5'-diphosphate + H2O = a ribonucleoside 5'-phosphate + phosphate + H(+)</text>
        <dbReference type="Rhea" id="RHEA:36799"/>
        <dbReference type="ChEBI" id="CHEBI:15377"/>
        <dbReference type="ChEBI" id="CHEBI:15378"/>
        <dbReference type="ChEBI" id="CHEBI:43474"/>
        <dbReference type="ChEBI" id="CHEBI:57930"/>
        <dbReference type="ChEBI" id="CHEBI:58043"/>
        <dbReference type="EC" id="3.6.1.6"/>
    </reaction>
</comment>
<comment type="cofactor">
    <cofactor evidence="1">
        <name>Mg(2+)</name>
        <dbReference type="ChEBI" id="CHEBI:18420"/>
    </cofactor>
</comment>
<comment type="similarity">
    <text evidence="1">Belongs to the Ntdp family.</text>
</comment>
<evidence type="ECO:0000255" key="1">
    <source>
        <dbReference type="HAMAP-Rule" id="MF_01568"/>
    </source>
</evidence>
<feature type="chain" id="PRO_1000185473" description="Nucleoside triphosphate/diphosphate phosphatase">
    <location>
        <begin position="1"/>
        <end position="181"/>
    </location>
</feature>
<feature type="active site" description="Proton donor" evidence="1">
    <location>
        <position position="26"/>
    </location>
</feature>
<feature type="binding site" evidence="1">
    <location>
        <position position="90"/>
    </location>
    <ligand>
        <name>Mg(2+)</name>
        <dbReference type="ChEBI" id="CHEBI:18420"/>
        <label>1</label>
    </ligand>
</feature>
<feature type="binding site" evidence="1">
    <location>
        <position position="106"/>
    </location>
    <ligand>
        <name>Mg(2+)</name>
        <dbReference type="ChEBI" id="CHEBI:18420"/>
        <label>1</label>
    </ligand>
</feature>
<feature type="binding site" evidence="1">
    <location>
        <position position="108"/>
    </location>
    <ligand>
        <name>Mg(2+)</name>
        <dbReference type="ChEBI" id="CHEBI:18420"/>
        <label>2</label>
    </ligand>
</feature>
<feature type="binding site" evidence="1">
    <location>
        <position position="110"/>
    </location>
    <ligand>
        <name>Mg(2+)</name>
        <dbReference type="ChEBI" id="CHEBI:18420"/>
        <label>1</label>
    </ligand>
</feature>
<feature type="binding site" evidence="1">
    <location>
        <position position="110"/>
    </location>
    <ligand>
        <name>Mg(2+)</name>
        <dbReference type="ChEBI" id="CHEBI:18420"/>
        <label>2</label>
    </ligand>
</feature>
<feature type="binding site" evidence="1">
    <location>
        <position position="123"/>
    </location>
    <ligand>
        <name>Mg(2+)</name>
        <dbReference type="ChEBI" id="CHEBI:18420"/>
        <label>2</label>
    </ligand>
</feature>
<feature type="binding site" evidence="1">
    <location>
        <position position="126"/>
    </location>
    <ligand>
        <name>Mg(2+)</name>
        <dbReference type="ChEBI" id="CHEBI:18420"/>
        <label>2</label>
    </ligand>
</feature>
<sequence>MVKETIPKEGENIKIQSYKHDGNIHRVWSETTILKGTDHVVIGGNDHTLVTESDGRTWITREPAIVYFHSEYWFNVICMFREDGVYYYCNLSSPFVCDDEALKYIDYDLDVKVYPNGKYHLLDEDEYQQHMQQMNYPKDIDVILRRNVDILQQWIEQKKGPFAPDFIKVWRERYKKLRQKS</sequence>
<dbReference type="EC" id="3.6.1.15" evidence="1"/>
<dbReference type="EC" id="3.6.1.6" evidence="1"/>
<dbReference type="EMBL" id="AM295250">
    <property type="protein sequence ID" value="CAL28345.1"/>
    <property type="molecule type" value="Genomic_DNA"/>
</dbReference>
<dbReference type="RefSeq" id="WP_015900685.1">
    <property type="nucleotide sequence ID" value="NC_012121.1"/>
</dbReference>
<dbReference type="SMR" id="B9DMW9"/>
<dbReference type="GeneID" id="93793895"/>
<dbReference type="KEGG" id="sca:SCA_1440"/>
<dbReference type="eggNOG" id="COG3557">
    <property type="taxonomic scope" value="Bacteria"/>
</dbReference>
<dbReference type="HOGENOM" id="CLU_109787_1_0_9"/>
<dbReference type="OrthoDB" id="1645325at2"/>
<dbReference type="BioCyc" id="SCAR396513:SCA_RS07330-MONOMER"/>
<dbReference type="Proteomes" id="UP000000444">
    <property type="component" value="Chromosome"/>
</dbReference>
<dbReference type="GO" id="GO:0000287">
    <property type="term" value="F:magnesium ion binding"/>
    <property type="evidence" value="ECO:0007669"/>
    <property type="project" value="UniProtKB-UniRule"/>
</dbReference>
<dbReference type="GO" id="GO:0017110">
    <property type="term" value="F:nucleoside diphosphate phosphatase activity"/>
    <property type="evidence" value="ECO:0007669"/>
    <property type="project" value="UniProtKB-UniRule"/>
</dbReference>
<dbReference type="GO" id="GO:0017111">
    <property type="term" value="F:ribonucleoside triphosphate phosphatase activity"/>
    <property type="evidence" value="ECO:0007669"/>
    <property type="project" value="UniProtKB-UniRule"/>
</dbReference>
<dbReference type="Gene3D" id="2.40.380.10">
    <property type="entry name" value="FomD-like"/>
    <property type="match status" value="1"/>
</dbReference>
<dbReference type="HAMAP" id="MF_01568">
    <property type="entry name" value="Ntdp"/>
    <property type="match status" value="1"/>
</dbReference>
<dbReference type="InterPro" id="IPR007295">
    <property type="entry name" value="DUF402"/>
</dbReference>
<dbReference type="InterPro" id="IPR035930">
    <property type="entry name" value="FomD-like_sf"/>
</dbReference>
<dbReference type="InterPro" id="IPR050212">
    <property type="entry name" value="Ntdp-like"/>
</dbReference>
<dbReference type="InterPro" id="IPR016882">
    <property type="entry name" value="SA1684"/>
</dbReference>
<dbReference type="NCBIfam" id="NF010183">
    <property type="entry name" value="PRK13662.1"/>
    <property type="match status" value="1"/>
</dbReference>
<dbReference type="PANTHER" id="PTHR39159">
    <property type="match status" value="1"/>
</dbReference>
<dbReference type="PANTHER" id="PTHR39159:SF1">
    <property type="entry name" value="UPF0374 PROTEIN YGAC"/>
    <property type="match status" value="1"/>
</dbReference>
<dbReference type="Pfam" id="PF04167">
    <property type="entry name" value="DUF402"/>
    <property type="match status" value="1"/>
</dbReference>
<dbReference type="PIRSF" id="PIRSF028345">
    <property type="entry name" value="UCP028345"/>
    <property type="match status" value="1"/>
</dbReference>
<dbReference type="SUPFAM" id="SSF159234">
    <property type="entry name" value="FomD-like"/>
    <property type="match status" value="1"/>
</dbReference>
<accession>B9DMW9</accession>
<keyword id="KW-0378">Hydrolase</keyword>
<keyword id="KW-0460">Magnesium</keyword>
<keyword id="KW-0479">Metal-binding</keyword>
<keyword id="KW-1185">Reference proteome</keyword>
<protein>
    <recommendedName>
        <fullName evidence="1">Nucleoside triphosphate/diphosphate phosphatase</fullName>
        <ecNumber evidence="1">3.6.1.15</ecNumber>
        <ecNumber evidence="1">3.6.1.6</ecNumber>
    </recommendedName>
</protein>
<name>NTDP_STACT</name>
<gene>
    <name type="ordered locus">Sca_1440</name>
</gene>
<organism>
    <name type="scientific">Staphylococcus carnosus (strain TM300)</name>
    <dbReference type="NCBI Taxonomy" id="396513"/>
    <lineage>
        <taxon>Bacteria</taxon>
        <taxon>Bacillati</taxon>
        <taxon>Bacillota</taxon>
        <taxon>Bacilli</taxon>
        <taxon>Bacillales</taxon>
        <taxon>Staphylococcaceae</taxon>
        <taxon>Staphylococcus</taxon>
    </lineage>
</organism>